<organism>
    <name type="scientific">Solibacter usitatus (strain Ellin6076)</name>
    <dbReference type="NCBI Taxonomy" id="234267"/>
    <lineage>
        <taxon>Bacteria</taxon>
        <taxon>Pseudomonadati</taxon>
        <taxon>Acidobacteriota</taxon>
        <taxon>Terriglobia</taxon>
        <taxon>Bryobacterales</taxon>
        <taxon>Solibacteraceae</taxon>
        <taxon>Candidatus Solibacter</taxon>
    </lineage>
</organism>
<gene>
    <name evidence="1" type="primary">ruvB</name>
    <name type="ordered locus">Acid_0957</name>
</gene>
<feature type="chain" id="PRO_1000057145" description="Holliday junction branch migration complex subunit RuvB">
    <location>
        <begin position="1"/>
        <end position="344"/>
    </location>
</feature>
<feature type="region of interest" description="Large ATPase domain (RuvB-L)" evidence="1">
    <location>
        <begin position="1"/>
        <end position="183"/>
    </location>
</feature>
<feature type="region of interest" description="Small ATPAse domain (RuvB-S)" evidence="1">
    <location>
        <begin position="184"/>
        <end position="254"/>
    </location>
</feature>
<feature type="region of interest" description="Head domain (RuvB-H)" evidence="1">
    <location>
        <begin position="257"/>
        <end position="344"/>
    </location>
</feature>
<feature type="binding site" evidence="1">
    <location>
        <position position="22"/>
    </location>
    <ligand>
        <name>ATP</name>
        <dbReference type="ChEBI" id="CHEBI:30616"/>
    </ligand>
</feature>
<feature type="binding site" evidence="1">
    <location>
        <position position="23"/>
    </location>
    <ligand>
        <name>ATP</name>
        <dbReference type="ChEBI" id="CHEBI:30616"/>
    </ligand>
</feature>
<feature type="binding site" evidence="1">
    <location>
        <position position="64"/>
    </location>
    <ligand>
        <name>ATP</name>
        <dbReference type="ChEBI" id="CHEBI:30616"/>
    </ligand>
</feature>
<feature type="binding site" evidence="1">
    <location>
        <position position="67"/>
    </location>
    <ligand>
        <name>ATP</name>
        <dbReference type="ChEBI" id="CHEBI:30616"/>
    </ligand>
</feature>
<feature type="binding site" evidence="1">
    <location>
        <position position="68"/>
    </location>
    <ligand>
        <name>ATP</name>
        <dbReference type="ChEBI" id="CHEBI:30616"/>
    </ligand>
</feature>
<feature type="binding site" evidence="1">
    <location>
        <position position="68"/>
    </location>
    <ligand>
        <name>Mg(2+)</name>
        <dbReference type="ChEBI" id="CHEBI:18420"/>
    </ligand>
</feature>
<feature type="binding site" evidence="1">
    <location>
        <position position="69"/>
    </location>
    <ligand>
        <name>ATP</name>
        <dbReference type="ChEBI" id="CHEBI:30616"/>
    </ligand>
</feature>
<feature type="binding site" evidence="1">
    <location>
        <begin position="130"/>
        <end position="132"/>
    </location>
    <ligand>
        <name>ATP</name>
        <dbReference type="ChEBI" id="CHEBI:30616"/>
    </ligand>
</feature>
<feature type="binding site" evidence="1">
    <location>
        <position position="173"/>
    </location>
    <ligand>
        <name>ATP</name>
        <dbReference type="ChEBI" id="CHEBI:30616"/>
    </ligand>
</feature>
<feature type="binding site" evidence="1">
    <location>
        <position position="183"/>
    </location>
    <ligand>
        <name>ATP</name>
        <dbReference type="ChEBI" id="CHEBI:30616"/>
    </ligand>
</feature>
<feature type="binding site" evidence="1">
    <location>
        <position position="220"/>
    </location>
    <ligand>
        <name>ATP</name>
        <dbReference type="ChEBI" id="CHEBI:30616"/>
    </ligand>
</feature>
<feature type="binding site" evidence="1">
    <location>
        <position position="312"/>
    </location>
    <ligand>
        <name>DNA</name>
        <dbReference type="ChEBI" id="CHEBI:16991"/>
    </ligand>
</feature>
<feature type="binding site" evidence="1">
    <location>
        <position position="317"/>
    </location>
    <ligand>
        <name>DNA</name>
        <dbReference type="ChEBI" id="CHEBI:16991"/>
    </ligand>
</feature>
<sequence>MPDRELISGDRQAEDAQFEVGLRPRRLADFTGQSKLKENLSIAIEAARMRGEAMDHVLLYGPPGLGKTTLASIIAEELQVQFTPTSGPVLQKKLDLTGILSNIRLHQVFFIDEIHRLLPDVEEMLYSALEDFRVDILVGVGPGARTHSLPMPKFTAIGATTRQGLVSAPLRGRFGLVLRLDPYNTEELKAIVKRSARLLTVEIEDGAAEEIARRCRGTPRIANRLLRRVRDYAQVRADGRINQKVAQTALNLLDVDRYGLDEIDQKIMMTILEKYRGGPVGVNTIAASISEESETIEEVYEPYLIQLGFLNRTPRGRVATELAYDYFKVKRKLREGDHPSLFEA</sequence>
<dbReference type="EC" id="3.6.4.-" evidence="1"/>
<dbReference type="EMBL" id="CP000473">
    <property type="protein sequence ID" value="ABJ81956.1"/>
    <property type="molecule type" value="Genomic_DNA"/>
</dbReference>
<dbReference type="SMR" id="Q02AG6"/>
<dbReference type="FunCoup" id="Q02AG6">
    <property type="interactions" value="282"/>
</dbReference>
<dbReference type="STRING" id="234267.Acid_0957"/>
<dbReference type="KEGG" id="sus:Acid_0957"/>
<dbReference type="eggNOG" id="COG2255">
    <property type="taxonomic scope" value="Bacteria"/>
</dbReference>
<dbReference type="HOGENOM" id="CLU_055599_1_0_0"/>
<dbReference type="InParanoid" id="Q02AG6"/>
<dbReference type="OrthoDB" id="9804478at2"/>
<dbReference type="GO" id="GO:0005737">
    <property type="term" value="C:cytoplasm"/>
    <property type="evidence" value="ECO:0007669"/>
    <property type="project" value="UniProtKB-SubCell"/>
</dbReference>
<dbReference type="GO" id="GO:0048476">
    <property type="term" value="C:Holliday junction resolvase complex"/>
    <property type="evidence" value="ECO:0007669"/>
    <property type="project" value="UniProtKB-UniRule"/>
</dbReference>
<dbReference type="GO" id="GO:0005524">
    <property type="term" value="F:ATP binding"/>
    <property type="evidence" value="ECO:0007669"/>
    <property type="project" value="UniProtKB-UniRule"/>
</dbReference>
<dbReference type="GO" id="GO:0016887">
    <property type="term" value="F:ATP hydrolysis activity"/>
    <property type="evidence" value="ECO:0007669"/>
    <property type="project" value="InterPro"/>
</dbReference>
<dbReference type="GO" id="GO:0000400">
    <property type="term" value="F:four-way junction DNA binding"/>
    <property type="evidence" value="ECO:0007669"/>
    <property type="project" value="UniProtKB-UniRule"/>
</dbReference>
<dbReference type="GO" id="GO:0009378">
    <property type="term" value="F:four-way junction helicase activity"/>
    <property type="evidence" value="ECO:0007669"/>
    <property type="project" value="InterPro"/>
</dbReference>
<dbReference type="GO" id="GO:0006310">
    <property type="term" value="P:DNA recombination"/>
    <property type="evidence" value="ECO:0007669"/>
    <property type="project" value="UniProtKB-UniRule"/>
</dbReference>
<dbReference type="GO" id="GO:0006281">
    <property type="term" value="P:DNA repair"/>
    <property type="evidence" value="ECO:0007669"/>
    <property type="project" value="UniProtKB-UniRule"/>
</dbReference>
<dbReference type="CDD" id="cd00009">
    <property type="entry name" value="AAA"/>
    <property type="match status" value="1"/>
</dbReference>
<dbReference type="Gene3D" id="1.10.8.60">
    <property type="match status" value="1"/>
</dbReference>
<dbReference type="Gene3D" id="3.40.50.300">
    <property type="entry name" value="P-loop containing nucleotide triphosphate hydrolases"/>
    <property type="match status" value="1"/>
</dbReference>
<dbReference type="Gene3D" id="1.10.10.10">
    <property type="entry name" value="Winged helix-like DNA-binding domain superfamily/Winged helix DNA-binding domain"/>
    <property type="match status" value="1"/>
</dbReference>
<dbReference type="HAMAP" id="MF_00016">
    <property type="entry name" value="DNA_HJ_migration_RuvB"/>
    <property type="match status" value="1"/>
</dbReference>
<dbReference type="InterPro" id="IPR003593">
    <property type="entry name" value="AAA+_ATPase"/>
</dbReference>
<dbReference type="InterPro" id="IPR041445">
    <property type="entry name" value="AAA_lid_4"/>
</dbReference>
<dbReference type="InterPro" id="IPR004605">
    <property type="entry name" value="DNA_helicase_Holl-junc_RuvB"/>
</dbReference>
<dbReference type="InterPro" id="IPR027417">
    <property type="entry name" value="P-loop_NTPase"/>
</dbReference>
<dbReference type="InterPro" id="IPR008824">
    <property type="entry name" value="RuvB-like_N"/>
</dbReference>
<dbReference type="InterPro" id="IPR008823">
    <property type="entry name" value="RuvB_C"/>
</dbReference>
<dbReference type="InterPro" id="IPR036388">
    <property type="entry name" value="WH-like_DNA-bd_sf"/>
</dbReference>
<dbReference type="InterPro" id="IPR036390">
    <property type="entry name" value="WH_DNA-bd_sf"/>
</dbReference>
<dbReference type="NCBIfam" id="NF000868">
    <property type="entry name" value="PRK00080.1"/>
    <property type="match status" value="1"/>
</dbReference>
<dbReference type="NCBIfam" id="TIGR00635">
    <property type="entry name" value="ruvB"/>
    <property type="match status" value="1"/>
</dbReference>
<dbReference type="PANTHER" id="PTHR42848">
    <property type="match status" value="1"/>
</dbReference>
<dbReference type="PANTHER" id="PTHR42848:SF1">
    <property type="entry name" value="HOLLIDAY JUNCTION BRANCH MIGRATION COMPLEX SUBUNIT RUVB"/>
    <property type="match status" value="1"/>
</dbReference>
<dbReference type="Pfam" id="PF17864">
    <property type="entry name" value="AAA_lid_4"/>
    <property type="match status" value="1"/>
</dbReference>
<dbReference type="Pfam" id="PF05491">
    <property type="entry name" value="RuvB_C"/>
    <property type="match status" value="1"/>
</dbReference>
<dbReference type="Pfam" id="PF05496">
    <property type="entry name" value="RuvB_N"/>
    <property type="match status" value="1"/>
</dbReference>
<dbReference type="SMART" id="SM00382">
    <property type="entry name" value="AAA"/>
    <property type="match status" value="1"/>
</dbReference>
<dbReference type="SUPFAM" id="SSF52540">
    <property type="entry name" value="P-loop containing nucleoside triphosphate hydrolases"/>
    <property type="match status" value="1"/>
</dbReference>
<dbReference type="SUPFAM" id="SSF46785">
    <property type="entry name" value="Winged helix' DNA-binding domain"/>
    <property type="match status" value="1"/>
</dbReference>
<comment type="function">
    <text evidence="1">The RuvA-RuvB-RuvC complex processes Holliday junction (HJ) DNA during genetic recombination and DNA repair, while the RuvA-RuvB complex plays an important role in the rescue of blocked DNA replication forks via replication fork reversal (RFR). RuvA specifically binds to HJ cruciform DNA, conferring on it an open structure. The RuvB hexamer acts as an ATP-dependent pump, pulling dsDNA into and through the RuvAB complex. RuvB forms 2 homohexamers on either side of HJ DNA bound by 1 or 2 RuvA tetramers; 4 subunits per hexamer contact DNA at a time. Coordinated motions by a converter formed by DNA-disengaged RuvB subunits stimulates ATP hydrolysis and nucleotide exchange. Immobilization of the converter enables RuvB to convert the ATP-contained energy into a lever motion, pulling 2 nucleotides of DNA out of the RuvA tetramer per ATP hydrolyzed, thus driving DNA branch migration. The RuvB motors rotate together with the DNA substrate, which together with the progressing nucleotide cycle form the mechanistic basis for DNA recombination by continuous HJ branch migration. Branch migration allows RuvC to scan DNA until it finds its consensus sequence, where it cleaves and resolves cruciform DNA.</text>
</comment>
<comment type="catalytic activity">
    <reaction evidence="1">
        <text>ATP + H2O = ADP + phosphate + H(+)</text>
        <dbReference type="Rhea" id="RHEA:13065"/>
        <dbReference type="ChEBI" id="CHEBI:15377"/>
        <dbReference type="ChEBI" id="CHEBI:15378"/>
        <dbReference type="ChEBI" id="CHEBI:30616"/>
        <dbReference type="ChEBI" id="CHEBI:43474"/>
        <dbReference type="ChEBI" id="CHEBI:456216"/>
    </reaction>
</comment>
<comment type="subunit">
    <text evidence="1">Homohexamer. Forms an RuvA(8)-RuvB(12)-Holliday junction (HJ) complex. HJ DNA is sandwiched between 2 RuvA tetramers; dsDNA enters through RuvA and exits via RuvB. An RuvB hexamer assembles on each DNA strand where it exits the tetramer. Each RuvB hexamer is contacted by two RuvA subunits (via domain III) on 2 adjacent RuvB subunits; this complex drives branch migration. In the full resolvosome a probable DNA-RuvA(4)-RuvB(12)-RuvC(2) complex forms which resolves the HJ.</text>
</comment>
<comment type="subcellular location">
    <subcellularLocation>
        <location evidence="1">Cytoplasm</location>
    </subcellularLocation>
</comment>
<comment type="domain">
    <text evidence="1">Has 3 domains, the large (RuvB-L) and small ATPase (RuvB-S) domains and the C-terminal head (RuvB-H) domain. The head domain binds DNA, while the ATPase domains jointly bind ATP, ADP or are empty depending on the state of the subunit in the translocation cycle. During a single DNA translocation step the structure of each domain remains the same, but their relative positions change.</text>
</comment>
<comment type="similarity">
    <text evidence="1">Belongs to the RuvB family.</text>
</comment>
<evidence type="ECO:0000255" key="1">
    <source>
        <dbReference type="HAMAP-Rule" id="MF_00016"/>
    </source>
</evidence>
<reference key="1">
    <citation type="journal article" date="2009" name="Appl. Environ. Microbiol.">
        <title>Three genomes from the phylum Acidobacteria provide insight into the lifestyles of these microorganisms in soils.</title>
        <authorList>
            <person name="Ward N.L."/>
            <person name="Challacombe J.F."/>
            <person name="Janssen P.H."/>
            <person name="Henrissat B."/>
            <person name="Coutinho P.M."/>
            <person name="Wu M."/>
            <person name="Xie G."/>
            <person name="Haft D.H."/>
            <person name="Sait M."/>
            <person name="Badger J."/>
            <person name="Barabote R.D."/>
            <person name="Bradley B."/>
            <person name="Brettin T.S."/>
            <person name="Brinkac L.M."/>
            <person name="Bruce D."/>
            <person name="Creasy T."/>
            <person name="Daugherty S.C."/>
            <person name="Davidsen T.M."/>
            <person name="DeBoy R.T."/>
            <person name="Detter J.C."/>
            <person name="Dodson R.J."/>
            <person name="Durkin A.S."/>
            <person name="Ganapathy A."/>
            <person name="Gwinn-Giglio M."/>
            <person name="Han C.S."/>
            <person name="Khouri H."/>
            <person name="Kiss H."/>
            <person name="Kothari S.P."/>
            <person name="Madupu R."/>
            <person name="Nelson K.E."/>
            <person name="Nelson W.C."/>
            <person name="Paulsen I."/>
            <person name="Penn K."/>
            <person name="Ren Q."/>
            <person name="Rosovitz M.J."/>
            <person name="Selengut J.D."/>
            <person name="Shrivastava S."/>
            <person name="Sullivan S.A."/>
            <person name="Tapia R."/>
            <person name="Thompson L.S."/>
            <person name="Watkins K.L."/>
            <person name="Yang Q."/>
            <person name="Yu C."/>
            <person name="Zafar N."/>
            <person name="Zhou L."/>
            <person name="Kuske C.R."/>
        </authorList>
    </citation>
    <scope>NUCLEOTIDE SEQUENCE [LARGE SCALE GENOMIC DNA]</scope>
    <source>
        <strain>Ellin6076</strain>
    </source>
</reference>
<protein>
    <recommendedName>
        <fullName evidence="1">Holliday junction branch migration complex subunit RuvB</fullName>
        <ecNumber evidence="1">3.6.4.-</ecNumber>
    </recommendedName>
</protein>
<keyword id="KW-0067">ATP-binding</keyword>
<keyword id="KW-0963">Cytoplasm</keyword>
<keyword id="KW-0227">DNA damage</keyword>
<keyword id="KW-0233">DNA recombination</keyword>
<keyword id="KW-0234">DNA repair</keyword>
<keyword id="KW-0238">DNA-binding</keyword>
<keyword id="KW-0378">Hydrolase</keyword>
<keyword id="KW-0547">Nucleotide-binding</keyword>
<accession>Q02AG6</accession>
<proteinExistence type="inferred from homology"/>
<name>RUVB_SOLUE</name>